<comment type="function">
    <text evidence="1">Imparts immunity to bacteriocin hiracin-JM79 to naturally sensitive host strains.</text>
</comment>
<keyword id="KW-0079">Bacteriocin immunity</keyword>
<feature type="chain" id="PRO_0000352773" description="Hiracin-JM79 immunity factor">
    <location>
        <begin position="1"/>
        <end position="95"/>
    </location>
</feature>
<gene>
    <name evidence="2" type="primary">hiriJM79</name>
</gene>
<evidence type="ECO:0000269" key="1">
    <source>
    </source>
</evidence>
<evidence type="ECO:0000303" key="2">
    <source>
    </source>
</evidence>
<evidence type="ECO:0000305" key="3"/>
<evidence type="ECO:0000312" key="4">
    <source>
        <dbReference type="EMBL" id="ABG47454.1"/>
    </source>
</evidence>
<proteinExistence type="predicted"/>
<reference evidence="3 4" key="1">
    <citation type="journal article" date="2007" name="FEMS Microbiol. Lett.">
        <title>Amino acid and nucleotide sequence, adjacent genes, and heterologous expression of hiracin JM79, a sec-dependent bacteriocin produced by Enterococcus hirae DCH5, isolated from Mallard ducks (Anas platyrhynchos).</title>
        <authorList>
            <person name="Sanchez J."/>
            <person name="Diep D.B."/>
            <person name="Herranz C."/>
            <person name="Nes I.F."/>
            <person name="Cintas L.M."/>
            <person name="Hernandez P.E."/>
        </authorList>
    </citation>
    <scope>NUCLEOTIDE SEQUENCE [GENOMIC DNA]</scope>
    <scope>FUNCTION</scope>
    <source>
        <strain evidence="4">DCH5</strain>
    </source>
</reference>
<organism>
    <name type="scientific">Enterococcus hirae</name>
    <dbReference type="NCBI Taxonomy" id="1354"/>
    <lineage>
        <taxon>Bacteria</taxon>
        <taxon>Bacillati</taxon>
        <taxon>Bacillota</taxon>
        <taxon>Bacilli</taxon>
        <taxon>Lactobacillales</taxon>
        <taxon>Enterococcaceae</taxon>
        <taxon>Enterococcus</taxon>
    </lineage>
</organism>
<dbReference type="EMBL" id="DQ664500">
    <property type="protein sequence ID" value="ABG47454.1"/>
    <property type="molecule type" value="Genomic_DNA"/>
</dbReference>
<dbReference type="RefSeq" id="WP_002363589.1">
    <property type="nucleotide sequence ID" value="NZ_CABEIL010000002.1"/>
</dbReference>
<dbReference type="SMR" id="Q0Z8B5"/>
<dbReference type="GO" id="GO:0030153">
    <property type="term" value="P:bacteriocin immunity"/>
    <property type="evidence" value="ECO:0007669"/>
    <property type="project" value="UniProtKB-KW"/>
</dbReference>
<dbReference type="Gene3D" id="1.20.1440.50">
    <property type="entry name" value="Ta0600-like"/>
    <property type="match status" value="1"/>
</dbReference>
<dbReference type="InterPro" id="IPR015046">
    <property type="entry name" value="LciA_Immunity-like"/>
</dbReference>
<dbReference type="InterPro" id="IPR023130">
    <property type="entry name" value="Ta0600-like_sf"/>
</dbReference>
<dbReference type="Pfam" id="PF08951">
    <property type="entry name" value="EntA_Immun"/>
    <property type="match status" value="1"/>
</dbReference>
<dbReference type="SUPFAM" id="SSF109797">
    <property type="entry name" value="Bacteriocin immunity protein-like"/>
    <property type="match status" value="1"/>
</dbReference>
<name>HJMI_ENTHR</name>
<sequence>MDFTKEEKLLNAISKVYNEATIDDYPDLKEKLFLYSKEISEGKSVGEVSMKLSSFLGRYILKHKFGLPKSLIELQEIVSKESQVYRGWASIGIWS</sequence>
<accession>Q0Z8B5</accession>
<protein>
    <recommendedName>
        <fullName>Hiracin-JM79 immunity factor</fullName>
    </recommendedName>
</protein>